<gene>
    <name type="primary">Capn3</name>
</gene>
<evidence type="ECO:0000250" key="1">
    <source>
        <dbReference type="UniProtKB" id="P20807"/>
    </source>
</evidence>
<evidence type="ECO:0000255" key="2">
    <source>
        <dbReference type="PROSITE-ProRule" id="PRU00239"/>
    </source>
</evidence>
<evidence type="ECO:0000255" key="3">
    <source>
        <dbReference type="PROSITE-ProRule" id="PRU00448"/>
    </source>
</evidence>
<evidence type="ECO:0000256" key="4">
    <source>
        <dbReference type="SAM" id="MobiDB-lite"/>
    </source>
</evidence>
<evidence type="ECO:0000305" key="5"/>
<protein>
    <recommendedName>
        <fullName>Calpain-3</fullName>
        <ecNumber>3.4.22.54</ecNumber>
    </recommendedName>
    <alternativeName>
        <fullName>Calcium-activated neutral proteinase 3</fullName>
        <shortName>CANP 3</shortName>
    </alternativeName>
    <alternativeName>
        <fullName>Calpain L3</fullName>
    </alternativeName>
    <alternativeName>
        <fullName>Calpain p94</fullName>
    </alternativeName>
    <alternativeName>
        <fullName>Muscle-specific calcium-activated neutral protease 3</fullName>
    </alternativeName>
</protein>
<keyword id="KW-0106">Calcium</keyword>
<keyword id="KW-0963">Cytoplasm</keyword>
<keyword id="KW-0378">Hydrolase</keyword>
<keyword id="KW-0479">Metal-binding</keyword>
<keyword id="KW-0539">Nucleus</keyword>
<keyword id="KW-0645">Protease</keyword>
<keyword id="KW-1185">Reference proteome</keyword>
<keyword id="KW-0677">Repeat</keyword>
<keyword id="KW-0788">Thiol protease</keyword>
<accession>P16259</accession>
<dbReference type="EC" id="3.4.22.54"/>
<dbReference type="EMBL" id="J05121">
    <property type="protein sequence ID" value="AAA41790.1"/>
    <property type="molecule type" value="mRNA"/>
</dbReference>
<dbReference type="PIR" id="B34488">
    <property type="entry name" value="B34488"/>
</dbReference>
<dbReference type="RefSeq" id="NP_058813.1">
    <property type="nucleotide sequence ID" value="NM_017117.1"/>
</dbReference>
<dbReference type="SMR" id="P16259"/>
<dbReference type="FunCoup" id="P16259">
    <property type="interactions" value="138"/>
</dbReference>
<dbReference type="STRING" id="10116.ENSRNOP00000011761"/>
<dbReference type="MEROPS" id="C02.004"/>
<dbReference type="GlyGen" id="P16259">
    <property type="glycosylation" value="1 site"/>
</dbReference>
<dbReference type="PhosphoSitePlus" id="P16259"/>
<dbReference type="PaxDb" id="10116-ENSRNOP00000011761"/>
<dbReference type="GeneID" id="29155"/>
<dbReference type="KEGG" id="rno:29155"/>
<dbReference type="UCSC" id="RGD:2269">
    <property type="organism name" value="rat"/>
</dbReference>
<dbReference type="AGR" id="RGD:2269"/>
<dbReference type="CTD" id="825"/>
<dbReference type="RGD" id="2269">
    <property type="gene designation" value="Capn3"/>
</dbReference>
<dbReference type="eggNOG" id="KOG0045">
    <property type="taxonomic scope" value="Eukaryota"/>
</dbReference>
<dbReference type="InParanoid" id="P16259"/>
<dbReference type="PhylomeDB" id="P16259"/>
<dbReference type="BRENDA" id="3.4.22.54">
    <property type="organism ID" value="5301"/>
</dbReference>
<dbReference type="Reactome" id="R-RNO-1474228">
    <property type="pathway name" value="Degradation of the extracellular matrix"/>
</dbReference>
<dbReference type="PRO" id="PR:P16259"/>
<dbReference type="Proteomes" id="UP000002494">
    <property type="component" value="Unplaced"/>
</dbReference>
<dbReference type="GO" id="GO:0005737">
    <property type="term" value="C:cytoplasm"/>
    <property type="evidence" value="ECO:0000266"/>
    <property type="project" value="RGD"/>
</dbReference>
<dbReference type="GO" id="GO:0005829">
    <property type="term" value="C:cytosol"/>
    <property type="evidence" value="ECO:0000250"/>
    <property type="project" value="UniProtKB"/>
</dbReference>
<dbReference type="GO" id="GO:0030016">
    <property type="term" value="C:myofibril"/>
    <property type="evidence" value="ECO:0000314"/>
    <property type="project" value="UniProtKB"/>
</dbReference>
<dbReference type="GO" id="GO:0005730">
    <property type="term" value="C:nucleolus"/>
    <property type="evidence" value="ECO:0000250"/>
    <property type="project" value="UniProtKB"/>
</dbReference>
<dbReference type="GO" id="GO:0005634">
    <property type="term" value="C:nucleus"/>
    <property type="evidence" value="ECO:0000266"/>
    <property type="project" value="RGD"/>
</dbReference>
<dbReference type="GO" id="GO:0005886">
    <property type="term" value="C:plasma membrane"/>
    <property type="evidence" value="ECO:0000314"/>
    <property type="project" value="UniProtKB"/>
</dbReference>
<dbReference type="GO" id="GO:0032991">
    <property type="term" value="C:protein-containing complex"/>
    <property type="evidence" value="ECO:0000250"/>
    <property type="project" value="UniProtKB"/>
</dbReference>
<dbReference type="GO" id="GO:0030315">
    <property type="term" value="C:T-tubule"/>
    <property type="evidence" value="ECO:0000314"/>
    <property type="project" value="UniProtKB"/>
</dbReference>
<dbReference type="GO" id="GO:0030018">
    <property type="term" value="C:Z disc"/>
    <property type="evidence" value="ECO:0000314"/>
    <property type="project" value="UniProtKB"/>
</dbReference>
<dbReference type="GO" id="GO:0005509">
    <property type="term" value="F:calcium ion binding"/>
    <property type="evidence" value="ECO:0000250"/>
    <property type="project" value="UniProtKB"/>
</dbReference>
<dbReference type="GO" id="GO:0004198">
    <property type="term" value="F:calcium-dependent cysteine-type endopeptidase activity"/>
    <property type="evidence" value="ECO:0000314"/>
    <property type="project" value="RGD"/>
</dbReference>
<dbReference type="GO" id="GO:0003824">
    <property type="term" value="F:catalytic activity"/>
    <property type="evidence" value="ECO:0000250"/>
    <property type="project" value="UniProtKB"/>
</dbReference>
<dbReference type="GO" id="GO:0019899">
    <property type="term" value="F:enzyme binding"/>
    <property type="evidence" value="ECO:0000353"/>
    <property type="project" value="UniProtKB"/>
</dbReference>
<dbReference type="GO" id="GO:0055103">
    <property type="term" value="F:ligase regulator activity"/>
    <property type="evidence" value="ECO:0000250"/>
    <property type="project" value="UniProtKB"/>
</dbReference>
<dbReference type="GO" id="GO:0060090">
    <property type="term" value="F:molecular adaptor activity"/>
    <property type="evidence" value="ECO:0000250"/>
    <property type="project" value="UniProtKB"/>
</dbReference>
<dbReference type="GO" id="GO:0008233">
    <property type="term" value="F:peptidase activity"/>
    <property type="evidence" value="ECO:0000314"/>
    <property type="project" value="RGD"/>
</dbReference>
<dbReference type="GO" id="GO:0005102">
    <property type="term" value="F:signaling receptor binding"/>
    <property type="evidence" value="ECO:0000353"/>
    <property type="project" value="UniProtKB"/>
</dbReference>
<dbReference type="GO" id="GO:0031402">
    <property type="term" value="F:sodium ion binding"/>
    <property type="evidence" value="ECO:0000250"/>
    <property type="project" value="UniProtKB"/>
</dbReference>
<dbReference type="GO" id="GO:0008307">
    <property type="term" value="F:structural constituent of muscle"/>
    <property type="evidence" value="ECO:0000250"/>
    <property type="project" value="UniProtKB"/>
</dbReference>
<dbReference type="GO" id="GO:0031432">
    <property type="term" value="F:titin binding"/>
    <property type="evidence" value="ECO:0000314"/>
    <property type="project" value="UniProtKB"/>
</dbReference>
<dbReference type="GO" id="GO:1990092">
    <property type="term" value="P:calcium-dependent self proteolysis"/>
    <property type="evidence" value="ECO:0000250"/>
    <property type="project" value="UniProtKB"/>
</dbReference>
<dbReference type="GO" id="GO:0071277">
    <property type="term" value="P:cellular response to calcium ion"/>
    <property type="evidence" value="ECO:0000250"/>
    <property type="project" value="UniProtKB"/>
</dbReference>
<dbReference type="GO" id="GO:0071472">
    <property type="term" value="P:cellular response to salt stress"/>
    <property type="evidence" value="ECO:0000250"/>
    <property type="project" value="UniProtKB"/>
</dbReference>
<dbReference type="GO" id="GO:0070315">
    <property type="term" value="P:G1 to G0 transition involved in cell differentiation"/>
    <property type="evidence" value="ECO:0000266"/>
    <property type="project" value="RGD"/>
</dbReference>
<dbReference type="GO" id="GO:0061061">
    <property type="term" value="P:muscle structure development"/>
    <property type="evidence" value="ECO:0000250"/>
    <property type="project" value="UniProtKB"/>
</dbReference>
<dbReference type="GO" id="GO:0030239">
    <property type="term" value="P:myofibril assembly"/>
    <property type="evidence" value="ECO:0000250"/>
    <property type="project" value="UniProtKB"/>
</dbReference>
<dbReference type="GO" id="GO:0043066">
    <property type="term" value="P:negative regulation of apoptotic process"/>
    <property type="evidence" value="ECO:0000250"/>
    <property type="project" value="UniProtKB"/>
</dbReference>
<dbReference type="GO" id="GO:0045892">
    <property type="term" value="P:negative regulation of DNA-templated transcription"/>
    <property type="evidence" value="ECO:0000250"/>
    <property type="project" value="UniProtKB"/>
</dbReference>
<dbReference type="GO" id="GO:0033234">
    <property type="term" value="P:negative regulation of protein sumoylation"/>
    <property type="evidence" value="ECO:0000250"/>
    <property type="project" value="UniProtKB"/>
</dbReference>
<dbReference type="GO" id="GO:0045893">
    <property type="term" value="P:positive regulation of DNA-templated transcription"/>
    <property type="evidence" value="ECO:0000250"/>
    <property type="project" value="UniProtKB"/>
</dbReference>
<dbReference type="GO" id="GO:0045862">
    <property type="term" value="P:positive regulation of proteolysis"/>
    <property type="evidence" value="ECO:0000250"/>
    <property type="project" value="UniProtKB"/>
</dbReference>
<dbReference type="GO" id="GO:0051281">
    <property type="term" value="P:positive regulation of release of sequestered calcium ion into cytosol"/>
    <property type="evidence" value="ECO:0000250"/>
    <property type="project" value="UniProtKB"/>
</dbReference>
<dbReference type="GO" id="GO:0014718">
    <property type="term" value="P:positive regulation of satellite cell activation involved in skeletal muscle regeneration"/>
    <property type="evidence" value="ECO:0000250"/>
    <property type="project" value="UniProtKB"/>
</dbReference>
<dbReference type="GO" id="GO:0012501">
    <property type="term" value="P:programmed cell death"/>
    <property type="evidence" value="ECO:0000266"/>
    <property type="project" value="RGD"/>
</dbReference>
<dbReference type="GO" id="GO:0030163">
    <property type="term" value="P:protein catabolic process"/>
    <property type="evidence" value="ECO:0000250"/>
    <property type="project" value="UniProtKB"/>
</dbReference>
<dbReference type="GO" id="GO:0031648">
    <property type="term" value="P:protein destabilization"/>
    <property type="evidence" value="ECO:0000266"/>
    <property type="project" value="RGD"/>
</dbReference>
<dbReference type="GO" id="GO:0072657">
    <property type="term" value="P:protein localization to membrane"/>
    <property type="evidence" value="ECO:0000250"/>
    <property type="project" value="UniProtKB"/>
</dbReference>
<dbReference type="GO" id="GO:0065003">
    <property type="term" value="P:protein-containing complex assembly"/>
    <property type="evidence" value="ECO:0000250"/>
    <property type="project" value="UniProtKB"/>
</dbReference>
<dbReference type="GO" id="GO:0006508">
    <property type="term" value="P:proteolysis"/>
    <property type="evidence" value="ECO:0000314"/>
    <property type="project" value="UniProtKB"/>
</dbReference>
<dbReference type="GO" id="GO:0043122">
    <property type="term" value="P:regulation of canonical NF-kappaB signal transduction"/>
    <property type="evidence" value="ECO:0000250"/>
    <property type="project" value="UniProtKB"/>
</dbReference>
<dbReference type="GO" id="GO:0045661">
    <property type="term" value="P:regulation of myoblast differentiation"/>
    <property type="evidence" value="ECO:0000266"/>
    <property type="project" value="RGD"/>
</dbReference>
<dbReference type="GO" id="GO:0051592">
    <property type="term" value="P:response to calcium ion"/>
    <property type="evidence" value="ECO:0000314"/>
    <property type="project" value="RGD"/>
</dbReference>
<dbReference type="GO" id="GO:0014850">
    <property type="term" value="P:response to muscle activity"/>
    <property type="evidence" value="ECO:0000314"/>
    <property type="project" value="UniProtKB"/>
</dbReference>
<dbReference type="GO" id="GO:0009410">
    <property type="term" value="P:response to xenobiotic stimulus"/>
    <property type="evidence" value="ECO:0000270"/>
    <property type="project" value="RGD"/>
</dbReference>
<dbReference type="GO" id="GO:0045214">
    <property type="term" value="P:sarcomere organization"/>
    <property type="evidence" value="ECO:0000250"/>
    <property type="project" value="UniProtKB"/>
</dbReference>
<dbReference type="GO" id="GO:0097264">
    <property type="term" value="P:self proteolysis"/>
    <property type="evidence" value="ECO:0000314"/>
    <property type="project" value="UniProtKB"/>
</dbReference>
<dbReference type="GO" id="GO:1990091">
    <property type="term" value="P:sodium-dependent self proteolysis"/>
    <property type="evidence" value="ECO:0000314"/>
    <property type="project" value="RGD"/>
</dbReference>
<dbReference type="CDD" id="cd00214">
    <property type="entry name" value="Calpain_III"/>
    <property type="match status" value="1"/>
</dbReference>
<dbReference type="CDD" id="cd00044">
    <property type="entry name" value="CysPc"/>
    <property type="match status" value="1"/>
</dbReference>
<dbReference type="CDD" id="cd16190">
    <property type="entry name" value="EFh_PEF_CAPN3"/>
    <property type="match status" value="1"/>
</dbReference>
<dbReference type="FunFam" id="3.90.70.10:FF:000555">
    <property type="entry name" value="Calpain-3"/>
    <property type="match status" value="1"/>
</dbReference>
<dbReference type="FunFam" id="1.10.238.10:FF:000065">
    <property type="entry name" value="calpain-3 isoform X1"/>
    <property type="match status" value="1"/>
</dbReference>
<dbReference type="FunFam" id="2.60.120.380:FF:000002">
    <property type="entry name" value="calpain-3 isoform X1"/>
    <property type="match status" value="1"/>
</dbReference>
<dbReference type="Gene3D" id="2.60.120.380">
    <property type="match status" value="1"/>
</dbReference>
<dbReference type="Gene3D" id="3.90.70.10">
    <property type="entry name" value="Cysteine proteinases"/>
    <property type="match status" value="1"/>
</dbReference>
<dbReference type="Gene3D" id="1.10.238.10">
    <property type="entry name" value="EF-hand"/>
    <property type="match status" value="1"/>
</dbReference>
<dbReference type="InterPro" id="IPR033883">
    <property type="entry name" value="C2_III"/>
</dbReference>
<dbReference type="InterPro" id="IPR022684">
    <property type="entry name" value="Calpain_cysteine_protease"/>
</dbReference>
<dbReference type="InterPro" id="IPR022682">
    <property type="entry name" value="Calpain_domain_III"/>
</dbReference>
<dbReference type="InterPro" id="IPR022683">
    <property type="entry name" value="Calpain_III"/>
</dbReference>
<dbReference type="InterPro" id="IPR036213">
    <property type="entry name" value="Calpain_III_sf"/>
</dbReference>
<dbReference type="InterPro" id="IPR054069">
    <property type="entry name" value="CAPN3/13-like_C_EFh"/>
</dbReference>
<dbReference type="InterPro" id="IPR029531">
    <property type="entry name" value="CAPN3_PEF"/>
</dbReference>
<dbReference type="InterPro" id="IPR011992">
    <property type="entry name" value="EF-hand-dom_pair"/>
</dbReference>
<dbReference type="InterPro" id="IPR018247">
    <property type="entry name" value="EF_Hand_1_Ca_BS"/>
</dbReference>
<dbReference type="InterPro" id="IPR002048">
    <property type="entry name" value="EF_hand_dom"/>
</dbReference>
<dbReference type="InterPro" id="IPR038765">
    <property type="entry name" value="Papain-like_cys_pep_sf"/>
</dbReference>
<dbReference type="InterPro" id="IPR000169">
    <property type="entry name" value="Pept_cys_AS"/>
</dbReference>
<dbReference type="InterPro" id="IPR001300">
    <property type="entry name" value="Peptidase_C2_calpain_cat"/>
</dbReference>
<dbReference type="PANTHER" id="PTHR10183">
    <property type="entry name" value="CALPAIN"/>
    <property type="match status" value="1"/>
</dbReference>
<dbReference type="PANTHER" id="PTHR10183:SF329">
    <property type="entry name" value="CALPAIN-3"/>
    <property type="match status" value="1"/>
</dbReference>
<dbReference type="Pfam" id="PF01067">
    <property type="entry name" value="Calpain_III"/>
    <property type="match status" value="1"/>
</dbReference>
<dbReference type="Pfam" id="PF16648">
    <property type="entry name" value="Calpain_u2"/>
    <property type="match status" value="1"/>
</dbReference>
<dbReference type="Pfam" id="PF21875">
    <property type="entry name" value="CAPN13-like_C_EFh"/>
    <property type="match status" value="1"/>
</dbReference>
<dbReference type="Pfam" id="PF13833">
    <property type="entry name" value="EF-hand_8"/>
    <property type="match status" value="1"/>
</dbReference>
<dbReference type="Pfam" id="PF00648">
    <property type="entry name" value="Peptidase_C2"/>
    <property type="match status" value="1"/>
</dbReference>
<dbReference type="PRINTS" id="PR00704">
    <property type="entry name" value="CALPAIN"/>
</dbReference>
<dbReference type="SMART" id="SM00720">
    <property type="entry name" value="calpain_III"/>
    <property type="match status" value="1"/>
</dbReference>
<dbReference type="SMART" id="SM00230">
    <property type="entry name" value="CysPc"/>
    <property type="match status" value="1"/>
</dbReference>
<dbReference type="SMART" id="SM00054">
    <property type="entry name" value="EFh"/>
    <property type="match status" value="3"/>
</dbReference>
<dbReference type="SUPFAM" id="SSF49758">
    <property type="entry name" value="Calpain large subunit, middle domain (domain III)"/>
    <property type="match status" value="1"/>
</dbReference>
<dbReference type="SUPFAM" id="SSF54001">
    <property type="entry name" value="Cysteine proteinases"/>
    <property type="match status" value="1"/>
</dbReference>
<dbReference type="SUPFAM" id="SSF47473">
    <property type="entry name" value="EF-hand"/>
    <property type="match status" value="1"/>
</dbReference>
<dbReference type="PROSITE" id="PS50203">
    <property type="entry name" value="CALPAIN_CAT"/>
    <property type="match status" value="1"/>
</dbReference>
<dbReference type="PROSITE" id="PS00018">
    <property type="entry name" value="EF_HAND_1"/>
    <property type="match status" value="2"/>
</dbReference>
<dbReference type="PROSITE" id="PS50222">
    <property type="entry name" value="EF_HAND_2"/>
    <property type="match status" value="4"/>
</dbReference>
<dbReference type="PROSITE" id="PS00139">
    <property type="entry name" value="THIOL_PROTEASE_CYS"/>
    <property type="match status" value="1"/>
</dbReference>
<reference key="1">
    <citation type="journal article" date="1989" name="J. Biol. Chem.">
        <title>Molecular cloning of a novel mammalian calcium-dependent protease distinct from both m- and mu-types. Specific expression of the mRNA in skeletal muscle.</title>
        <authorList>
            <person name="Sorimachi H."/>
            <person name="Imajoh-Ohmi S."/>
            <person name="Emori Y."/>
            <person name="Kawasaki H."/>
            <person name="Ohno S."/>
            <person name="Minami Y."/>
            <person name="Suzuki K."/>
        </authorList>
    </citation>
    <scope>NUCLEOTIDE SEQUENCE [MRNA]</scope>
    <source>
        <tissue>Skeletal muscle</tissue>
    </source>
</reference>
<name>CAN3_RAT</name>
<comment type="function">
    <text evidence="1">Calcium-regulated non-lysosomal thiol-protease. Proteolytically cleaves CTBP1 at 'His-399'. Mediates, with UTP25, the proteasome-independent degradation of p53/TP53.</text>
</comment>
<comment type="catalytic activity">
    <reaction>
        <text>Broad endopeptidase activity.</text>
        <dbReference type="EC" id="3.4.22.54"/>
    </reaction>
</comment>
<comment type="activity regulation">
    <text>Activated by micromolar concentrations of calcium and inhibited by calpastatin.</text>
</comment>
<comment type="subunit">
    <text evidence="1">Homodimer; via EF-hand domain 4. Interacts with TTN/titin. Interacts with CMYA5; this interaction, which results in CMYA5 proteolysis, may protect CAPN3 from autolysis. Interacts with SIMC1. Interacts with UTP25; the interaction is required for CAPN3 translocation to the nucleolus.</text>
</comment>
<comment type="subcellular location">
    <subcellularLocation>
        <location evidence="1">Cytoplasm</location>
    </subcellularLocation>
    <subcellularLocation>
        <location evidence="1">Nucleus</location>
        <location evidence="1">Nucleolus</location>
    </subcellularLocation>
</comment>
<comment type="tissue specificity">
    <text>Skeletal muscle.</text>
</comment>
<comment type="similarity">
    <text evidence="5">Belongs to the peptidase C2 family.</text>
</comment>
<organism>
    <name type="scientific">Rattus norvegicus</name>
    <name type="common">Rat</name>
    <dbReference type="NCBI Taxonomy" id="10116"/>
    <lineage>
        <taxon>Eukaryota</taxon>
        <taxon>Metazoa</taxon>
        <taxon>Chordata</taxon>
        <taxon>Craniata</taxon>
        <taxon>Vertebrata</taxon>
        <taxon>Euteleostomi</taxon>
        <taxon>Mammalia</taxon>
        <taxon>Eutheria</taxon>
        <taxon>Euarchontoglires</taxon>
        <taxon>Glires</taxon>
        <taxon>Rodentia</taxon>
        <taxon>Myomorpha</taxon>
        <taxon>Muroidea</taxon>
        <taxon>Muridae</taxon>
        <taxon>Murinae</taxon>
        <taxon>Rattus</taxon>
    </lineage>
</organism>
<proteinExistence type="evidence at transcript level"/>
<sequence length="821" mass="94127">MPTVISPTVAPRTGAEPRSPGPVPHPAQGKTTEAGGGHPGGIYSAIISRNFPIIGVKEKTFEQLHKKCLEKKVLYLDPEFPPDETSLFYSQKFPIQFVWKRPPEICENPRFIIGGANRTDICQGDLGDCWLLAAIACLTLNERLLFRVIPHDQSFTENYAGIFHFQFWRYGDWVDVVIDDCLPTYNNQLVFTKSNHRNEFWSALLEKAYAKLHGSYEALKGGNTTEAMEDFTGGVTEFFEIKDAPSDMYKIMRKAIERGSLMGCSIDDGTNMTYGTSPSGLNMGELIARMVRNMDNSLLRDSDLDPRASDDRPSRTIVPVQYETRMACGLVKGHAYSVTGLEEALFKGEKVKLVRLRNPWGQVEWNGSWSDGWKDWSFVDKDEKARLQHQVTEDGEFWMSYDDFVYHFTKLEICNLTADALESDKLQTWTVSVNEGRWVRGCSAGGCRNFPDTFWTNPQYRLKLLEEDDDPDDSEVICSFLVALMQKNRRKDRKLGANLFTIGFAIYEVPKEMHGNKQHLQKDFFLYNASKARSKTYINMREVSQRFRLPPSEYVIVPSTYEPHQEGEFILRVFSEKRNLSEEAENTISVDRPVKKKKNKPIIFVSDRANSNKELGVDQEAEEGKDKTGPDKQGESPQPRPGHTDQESEEQQQFRNIFRQIAGDDMEICADELKNVLNTVVNKHKDLKTQGFTLESCRSMIALMDTDGSGRLNLQEFHHLWKKIKAWQKIFKHYDTDHSGTINSYEMRNAVNDAGFHLNSQLYDIITMRYADKHMNIDFDSFICCFVRLEGMFRAFHAFDKDGDGIIKLNVLEWLQLTMYA</sequence>
<feature type="chain" id="PRO_0000207710" description="Calpain-3">
    <location>
        <begin position="1"/>
        <end position="821"/>
    </location>
</feature>
<feature type="domain" description="Calpain catalytic" evidence="2">
    <location>
        <begin position="74"/>
        <end position="417"/>
    </location>
</feature>
<feature type="domain" description="EF-hand 1" evidence="3">
    <location>
        <begin position="649"/>
        <end position="683"/>
    </location>
</feature>
<feature type="domain" description="EF-hand 2" evidence="3">
    <location>
        <begin position="692"/>
        <end position="725"/>
    </location>
</feature>
<feature type="domain" description="EF-hand 3" evidence="3">
    <location>
        <begin position="722"/>
        <end position="757"/>
    </location>
</feature>
<feature type="domain" description="EF-hand 4" evidence="3">
    <location>
        <begin position="787"/>
        <end position="821"/>
    </location>
</feature>
<feature type="region of interest" description="Disordered" evidence="4">
    <location>
        <begin position="1"/>
        <end position="37"/>
    </location>
</feature>
<feature type="region of interest" description="Domain III">
    <location>
        <begin position="418"/>
        <end position="586"/>
    </location>
</feature>
<feature type="region of interest" description="Linker">
    <location>
        <begin position="587"/>
        <end position="649"/>
    </location>
</feature>
<feature type="region of interest" description="Disordered" evidence="4">
    <location>
        <begin position="603"/>
        <end position="651"/>
    </location>
</feature>
<feature type="region of interest" description="Domain IV">
    <location>
        <begin position="650"/>
        <end position="820"/>
    </location>
</feature>
<feature type="compositionally biased region" description="Basic and acidic residues" evidence="4">
    <location>
        <begin position="622"/>
        <end position="634"/>
    </location>
</feature>
<feature type="active site" evidence="2">
    <location>
        <position position="129"/>
    </location>
</feature>
<feature type="active site" evidence="2">
    <location>
        <position position="334"/>
    </location>
</feature>
<feature type="active site" evidence="2">
    <location>
        <position position="358"/>
    </location>
</feature>
<feature type="binding site" evidence="1">
    <location>
        <position position="662"/>
    </location>
    <ligand>
        <name>Ca(2+)</name>
        <dbReference type="ChEBI" id="CHEBI:29108"/>
        <label>1</label>
    </ligand>
</feature>
<feature type="binding site" evidence="1">
    <location>
        <position position="665"/>
    </location>
    <ligand>
        <name>Ca(2+)</name>
        <dbReference type="ChEBI" id="CHEBI:29108"/>
        <label>1</label>
    </ligand>
</feature>
<feature type="binding site" evidence="1">
    <location>
        <position position="667"/>
    </location>
    <ligand>
        <name>Ca(2+)</name>
        <dbReference type="ChEBI" id="CHEBI:29108"/>
        <label>1</label>
    </ligand>
</feature>
<feature type="binding site" evidence="1">
    <location>
        <position position="672"/>
    </location>
    <ligand>
        <name>Ca(2+)</name>
        <dbReference type="ChEBI" id="CHEBI:29108"/>
        <label>1</label>
    </ligand>
</feature>
<feature type="binding site" evidence="3">
    <location>
        <position position="705"/>
    </location>
    <ligand>
        <name>Ca(2+)</name>
        <dbReference type="ChEBI" id="CHEBI:29108"/>
        <label>2</label>
    </ligand>
</feature>
<feature type="binding site" evidence="3">
    <location>
        <position position="707"/>
    </location>
    <ligand>
        <name>Ca(2+)</name>
        <dbReference type="ChEBI" id="CHEBI:29108"/>
        <label>2</label>
    </ligand>
</feature>
<feature type="binding site" evidence="3">
    <location>
        <position position="709"/>
    </location>
    <ligand>
        <name>Ca(2+)</name>
        <dbReference type="ChEBI" id="CHEBI:29108"/>
        <label>2</label>
    </ligand>
</feature>
<feature type="binding site" evidence="3">
    <location>
        <position position="711"/>
    </location>
    <ligand>
        <name>Ca(2+)</name>
        <dbReference type="ChEBI" id="CHEBI:29108"/>
        <label>2</label>
    </ligand>
</feature>
<feature type="binding site" evidence="3">
    <location>
        <position position="716"/>
    </location>
    <ligand>
        <name>Ca(2+)</name>
        <dbReference type="ChEBI" id="CHEBI:29108"/>
        <label>2</label>
    </ligand>
</feature>
<feature type="binding site" evidence="3">
    <location>
        <position position="735"/>
    </location>
    <ligand>
        <name>Ca(2+)</name>
        <dbReference type="ChEBI" id="CHEBI:29108"/>
        <label>3</label>
    </ligand>
</feature>
<feature type="binding site" evidence="3">
    <location>
        <position position="737"/>
    </location>
    <ligand>
        <name>Ca(2+)</name>
        <dbReference type="ChEBI" id="CHEBI:29108"/>
        <label>3</label>
    </ligand>
</feature>
<feature type="binding site" evidence="3">
    <location>
        <position position="739"/>
    </location>
    <ligand>
        <name>Ca(2+)</name>
        <dbReference type="ChEBI" id="CHEBI:29108"/>
        <label>3</label>
    </ligand>
</feature>
<feature type="binding site" evidence="3">
    <location>
        <position position="741"/>
    </location>
    <ligand>
        <name>Ca(2+)</name>
        <dbReference type="ChEBI" id="CHEBI:29108"/>
        <label>3</label>
    </ligand>
</feature>
<feature type="binding site" evidence="3">
    <location>
        <position position="746"/>
    </location>
    <ligand>
        <name>Ca(2+)</name>
        <dbReference type="ChEBI" id="CHEBI:29108"/>
        <label>3</label>
    </ligand>
</feature>
<feature type="binding site" evidence="1">
    <location>
        <position position="800"/>
    </location>
    <ligand>
        <name>Ca(2+)</name>
        <dbReference type="ChEBI" id="CHEBI:29108"/>
        <label>4</label>
    </ligand>
</feature>
<feature type="binding site" evidence="1">
    <location>
        <position position="802"/>
    </location>
    <ligand>
        <name>Ca(2+)</name>
        <dbReference type="ChEBI" id="CHEBI:29108"/>
        <label>4</label>
    </ligand>
</feature>
<feature type="binding site" evidence="1">
    <location>
        <position position="804"/>
    </location>
    <ligand>
        <name>Ca(2+)</name>
        <dbReference type="ChEBI" id="CHEBI:29108"/>
        <label>4</label>
    </ligand>
</feature>
<feature type="binding site" evidence="1">
    <location>
        <position position="806"/>
    </location>
    <ligand>
        <name>Ca(2+)</name>
        <dbReference type="ChEBI" id="CHEBI:29108"/>
        <label>4</label>
    </ligand>
</feature>